<accession>P9WKE4</accession>
<accession>L0T783</accession>
<accession>O06134</accession>
<protein>
    <recommendedName>
        <fullName>Pyruvate kinase</fullName>
        <shortName>PK</shortName>
        <ecNumber>2.7.1.40</ecNumber>
    </recommendedName>
</protein>
<dbReference type="EC" id="2.7.1.40"/>
<dbReference type="EMBL" id="AE000516">
    <property type="protein sequence ID" value="AAK45923.1"/>
    <property type="molecule type" value="Genomic_DNA"/>
</dbReference>
<dbReference type="PIR" id="G70557">
    <property type="entry name" value="G70557"/>
</dbReference>
<dbReference type="RefSeq" id="WP_003898945.1">
    <property type="nucleotide sequence ID" value="NZ_KK341227.1"/>
</dbReference>
<dbReference type="SMR" id="P9WKE4"/>
<dbReference type="GeneID" id="45425585"/>
<dbReference type="KEGG" id="mtc:MT1653"/>
<dbReference type="PATRIC" id="fig|83331.31.peg.1776"/>
<dbReference type="HOGENOM" id="CLU_015439_0_2_11"/>
<dbReference type="UniPathway" id="UPA00109">
    <property type="reaction ID" value="UER00188"/>
</dbReference>
<dbReference type="Proteomes" id="UP000001020">
    <property type="component" value="Chromosome"/>
</dbReference>
<dbReference type="GO" id="GO:0005524">
    <property type="term" value="F:ATP binding"/>
    <property type="evidence" value="ECO:0007669"/>
    <property type="project" value="UniProtKB-KW"/>
</dbReference>
<dbReference type="GO" id="GO:0016301">
    <property type="term" value="F:kinase activity"/>
    <property type="evidence" value="ECO:0007669"/>
    <property type="project" value="UniProtKB-KW"/>
</dbReference>
<dbReference type="GO" id="GO:0000287">
    <property type="term" value="F:magnesium ion binding"/>
    <property type="evidence" value="ECO:0007669"/>
    <property type="project" value="InterPro"/>
</dbReference>
<dbReference type="GO" id="GO:0030955">
    <property type="term" value="F:potassium ion binding"/>
    <property type="evidence" value="ECO:0007669"/>
    <property type="project" value="InterPro"/>
</dbReference>
<dbReference type="GO" id="GO:0004743">
    <property type="term" value="F:pyruvate kinase activity"/>
    <property type="evidence" value="ECO:0007669"/>
    <property type="project" value="UniProtKB-EC"/>
</dbReference>
<dbReference type="FunFam" id="2.40.33.10:FF:000001">
    <property type="entry name" value="Pyruvate kinase"/>
    <property type="match status" value="1"/>
</dbReference>
<dbReference type="FunFam" id="3.40.1380.20:FF:000009">
    <property type="entry name" value="Pyruvate kinase"/>
    <property type="match status" value="1"/>
</dbReference>
<dbReference type="Gene3D" id="3.20.20.60">
    <property type="entry name" value="Phosphoenolpyruvate-binding domains"/>
    <property type="match status" value="1"/>
</dbReference>
<dbReference type="Gene3D" id="2.40.33.10">
    <property type="entry name" value="PK beta-barrel domain-like"/>
    <property type="match status" value="1"/>
</dbReference>
<dbReference type="Gene3D" id="3.40.1380.20">
    <property type="entry name" value="Pyruvate kinase, C-terminal domain"/>
    <property type="match status" value="1"/>
</dbReference>
<dbReference type="InterPro" id="IPR001697">
    <property type="entry name" value="Pyr_Knase"/>
</dbReference>
<dbReference type="InterPro" id="IPR015813">
    <property type="entry name" value="Pyrv/PenolPyrv_kinase-like_dom"/>
</dbReference>
<dbReference type="InterPro" id="IPR040442">
    <property type="entry name" value="Pyrv_kinase-like_dom_sf"/>
</dbReference>
<dbReference type="InterPro" id="IPR011037">
    <property type="entry name" value="Pyrv_Knase-like_insert_dom_sf"/>
</dbReference>
<dbReference type="InterPro" id="IPR018209">
    <property type="entry name" value="Pyrv_Knase_AS"/>
</dbReference>
<dbReference type="InterPro" id="IPR015793">
    <property type="entry name" value="Pyrv_Knase_brl"/>
</dbReference>
<dbReference type="InterPro" id="IPR015795">
    <property type="entry name" value="Pyrv_Knase_C"/>
</dbReference>
<dbReference type="InterPro" id="IPR036918">
    <property type="entry name" value="Pyrv_Knase_C_sf"/>
</dbReference>
<dbReference type="InterPro" id="IPR015806">
    <property type="entry name" value="Pyrv_Knase_insert_dom_sf"/>
</dbReference>
<dbReference type="NCBIfam" id="NF004491">
    <property type="entry name" value="PRK05826.1"/>
    <property type="match status" value="1"/>
</dbReference>
<dbReference type="NCBIfam" id="NF004886">
    <property type="entry name" value="PRK06247.1"/>
    <property type="match status" value="1"/>
</dbReference>
<dbReference type="NCBIfam" id="NF004978">
    <property type="entry name" value="PRK06354.1"/>
    <property type="match status" value="1"/>
</dbReference>
<dbReference type="NCBIfam" id="TIGR01064">
    <property type="entry name" value="pyruv_kin"/>
    <property type="match status" value="1"/>
</dbReference>
<dbReference type="PANTHER" id="PTHR11817">
    <property type="entry name" value="PYRUVATE KINASE"/>
    <property type="match status" value="1"/>
</dbReference>
<dbReference type="Pfam" id="PF00224">
    <property type="entry name" value="PK"/>
    <property type="match status" value="1"/>
</dbReference>
<dbReference type="Pfam" id="PF02887">
    <property type="entry name" value="PK_C"/>
    <property type="match status" value="1"/>
</dbReference>
<dbReference type="PRINTS" id="PR01050">
    <property type="entry name" value="PYRUVTKNASE"/>
</dbReference>
<dbReference type="SUPFAM" id="SSF51621">
    <property type="entry name" value="Phosphoenolpyruvate/pyruvate domain"/>
    <property type="match status" value="1"/>
</dbReference>
<dbReference type="SUPFAM" id="SSF50800">
    <property type="entry name" value="PK beta-barrel domain-like"/>
    <property type="match status" value="1"/>
</dbReference>
<dbReference type="SUPFAM" id="SSF52935">
    <property type="entry name" value="PK C-terminal domain-like"/>
    <property type="match status" value="1"/>
</dbReference>
<dbReference type="PROSITE" id="PS00110">
    <property type="entry name" value="PYRUVATE_KINASE"/>
    <property type="match status" value="1"/>
</dbReference>
<keyword id="KW-0067">ATP-binding</keyword>
<keyword id="KW-0324">Glycolysis</keyword>
<keyword id="KW-0418">Kinase</keyword>
<keyword id="KW-0460">Magnesium</keyword>
<keyword id="KW-0479">Metal-binding</keyword>
<keyword id="KW-0547">Nucleotide-binding</keyword>
<keyword id="KW-0597">Phosphoprotein</keyword>
<keyword id="KW-0630">Potassium</keyword>
<keyword id="KW-0670">Pyruvate</keyword>
<keyword id="KW-1185">Reference proteome</keyword>
<keyword id="KW-0808">Transferase</keyword>
<comment type="catalytic activity">
    <reaction>
        <text>pyruvate + ATP = phosphoenolpyruvate + ADP + H(+)</text>
        <dbReference type="Rhea" id="RHEA:18157"/>
        <dbReference type="ChEBI" id="CHEBI:15361"/>
        <dbReference type="ChEBI" id="CHEBI:15378"/>
        <dbReference type="ChEBI" id="CHEBI:30616"/>
        <dbReference type="ChEBI" id="CHEBI:58702"/>
        <dbReference type="ChEBI" id="CHEBI:456216"/>
        <dbReference type="EC" id="2.7.1.40"/>
    </reaction>
</comment>
<comment type="cofactor">
    <cofactor evidence="1">
        <name>Mg(2+)</name>
        <dbReference type="ChEBI" id="CHEBI:18420"/>
    </cofactor>
</comment>
<comment type="cofactor">
    <cofactor evidence="1">
        <name>K(+)</name>
        <dbReference type="ChEBI" id="CHEBI:29103"/>
    </cofactor>
</comment>
<comment type="pathway">
    <text>Carbohydrate degradation; glycolysis; pyruvate from D-glyceraldehyde 3-phosphate: step 5/5.</text>
</comment>
<comment type="subunit">
    <text evidence="1">Homotetramer.</text>
</comment>
<comment type="similarity">
    <text evidence="3">Belongs to the pyruvate kinase family.</text>
</comment>
<reference key="1">
    <citation type="journal article" date="2002" name="J. Bacteriol.">
        <title>Whole-genome comparison of Mycobacterium tuberculosis clinical and laboratory strains.</title>
        <authorList>
            <person name="Fleischmann R.D."/>
            <person name="Alland D."/>
            <person name="Eisen J.A."/>
            <person name="Carpenter L."/>
            <person name="White O."/>
            <person name="Peterson J.D."/>
            <person name="DeBoy R.T."/>
            <person name="Dodson R.J."/>
            <person name="Gwinn M.L."/>
            <person name="Haft D.H."/>
            <person name="Hickey E.K."/>
            <person name="Kolonay J.F."/>
            <person name="Nelson W.C."/>
            <person name="Umayam L.A."/>
            <person name="Ermolaeva M.D."/>
            <person name="Salzberg S.L."/>
            <person name="Delcher A."/>
            <person name="Utterback T.R."/>
            <person name="Weidman J.F."/>
            <person name="Khouri H.M."/>
            <person name="Gill J."/>
            <person name="Mikula A."/>
            <person name="Bishai W."/>
            <person name="Jacobs W.R. Jr."/>
            <person name="Venter J.C."/>
            <person name="Fraser C.M."/>
        </authorList>
    </citation>
    <scope>NUCLEOTIDE SEQUENCE [LARGE SCALE GENOMIC DNA]</scope>
    <source>
        <strain>CDC 1551 / Oshkosh</strain>
    </source>
</reference>
<proteinExistence type="inferred from homology"/>
<organism>
    <name type="scientific">Mycobacterium tuberculosis (strain CDC 1551 / Oshkosh)</name>
    <dbReference type="NCBI Taxonomy" id="83331"/>
    <lineage>
        <taxon>Bacteria</taxon>
        <taxon>Bacillati</taxon>
        <taxon>Actinomycetota</taxon>
        <taxon>Actinomycetes</taxon>
        <taxon>Mycobacteriales</taxon>
        <taxon>Mycobacteriaceae</taxon>
        <taxon>Mycobacterium</taxon>
        <taxon>Mycobacterium tuberculosis complex</taxon>
    </lineage>
</organism>
<sequence length="472" mass="50699">MTRRGKIVCTLGPATQRDDLVRALVEAGMDVARMNFSHGDYDDHKVAYERVRVASDATGRAVGVLADLQGPKIRLGRFASGATHWAEGETVRITVGACEGSHDRVSTTYKRLAQDAVAGDRVLVDDGKVALVVDAVEGDDVVCTVVEGGPVSDNKGISLPGMNVTAPALSEKDIEDLTFALNLGVDMVALSFVRSPADVELVHEVMDRIGRRVPVIAKLEKPEAIDNLEAIVLAFDAVMVARGDLGVELPLEEVPLVQKRAIQMARENAKPVIVATQMLDSMIENSRPTRAEASDVANAVLDGADALMLSGETSVGKYPLAAVRTMSRIICAVEENSTAAPPLTHIPRTKRGVISYAARDIGERLDAKALVAFTQSGDTVRRLARLHTPLPLLAFTAWPEVRSQLAMTWGTETFIVPKMQSTDGMIRQVDKSLLELARYKRGDLVVIVAGAPPGTVGSTNLIHVHRIGEDDV</sequence>
<evidence type="ECO:0000250" key="1"/>
<evidence type="ECO:0000250" key="2">
    <source>
        <dbReference type="UniProtKB" id="P14618"/>
    </source>
</evidence>
<evidence type="ECO:0000305" key="3"/>
<gene>
    <name type="primary">pyk</name>
    <name type="synonym">pykA</name>
    <name type="ordered locus">MT1653</name>
</gene>
<name>KPYK_MYCTO</name>
<feature type="chain" id="PRO_0000427668" description="Pyruvate kinase">
    <location>
        <begin position="1"/>
        <end position="472"/>
    </location>
</feature>
<feature type="binding site" evidence="1">
    <location>
        <position position="33"/>
    </location>
    <ligand>
        <name>substrate</name>
    </ligand>
</feature>
<feature type="binding site" evidence="2">
    <location>
        <begin position="35"/>
        <end position="38"/>
    </location>
    <ligand>
        <name>ATP</name>
        <dbReference type="ChEBI" id="CHEBI:30616"/>
    </ligand>
</feature>
<feature type="binding site" evidence="1">
    <location>
        <position position="35"/>
    </location>
    <ligand>
        <name>K(+)</name>
        <dbReference type="ChEBI" id="CHEBI:29103"/>
    </ligand>
</feature>
<feature type="binding site" evidence="1">
    <location>
        <position position="37"/>
    </location>
    <ligand>
        <name>K(+)</name>
        <dbReference type="ChEBI" id="CHEBI:29103"/>
    </ligand>
</feature>
<feature type="binding site" evidence="1">
    <location>
        <position position="67"/>
    </location>
    <ligand>
        <name>K(+)</name>
        <dbReference type="ChEBI" id="CHEBI:29103"/>
    </ligand>
</feature>
<feature type="binding site" evidence="2">
    <location>
        <position position="74"/>
    </location>
    <ligand>
        <name>ATP</name>
        <dbReference type="ChEBI" id="CHEBI:30616"/>
    </ligand>
</feature>
<feature type="binding site" evidence="2">
    <location>
        <position position="155"/>
    </location>
    <ligand>
        <name>ATP</name>
        <dbReference type="ChEBI" id="CHEBI:30616"/>
    </ligand>
</feature>
<feature type="binding site" evidence="1">
    <location>
        <position position="220"/>
    </location>
    <ligand>
        <name>Mg(2+)</name>
        <dbReference type="ChEBI" id="CHEBI:18420"/>
    </ligand>
</feature>
<feature type="binding site" evidence="1">
    <location>
        <position position="243"/>
    </location>
    <ligand>
        <name>substrate</name>
    </ligand>
</feature>
<feature type="binding site" evidence="1">
    <location>
        <position position="244"/>
    </location>
    <ligand>
        <name>Mg(2+)</name>
        <dbReference type="ChEBI" id="CHEBI:18420"/>
    </ligand>
</feature>
<feature type="binding site" evidence="1">
    <location>
        <position position="244"/>
    </location>
    <ligand>
        <name>substrate</name>
    </ligand>
</feature>
<feature type="binding site" evidence="1">
    <location>
        <position position="276"/>
    </location>
    <ligand>
        <name>substrate</name>
    </ligand>
</feature>
<feature type="site" description="Transition state stabilizer" evidence="1">
    <location>
        <position position="218"/>
    </location>
</feature>